<name>G1_ORYSJ</name>
<organism>
    <name type="scientific">Oryza sativa subsp. japonica</name>
    <name type="common">Rice</name>
    <dbReference type="NCBI Taxonomy" id="39947"/>
    <lineage>
        <taxon>Eukaryota</taxon>
        <taxon>Viridiplantae</taxon>
        <taxon>Streptophyta</taxon>
        <taxon>Embryophyta</taxon>
        <taxon>Tracheophyta</taxon>
        <taxon>Spermatophyta</taxon>
        <taxon>Magnoliopsida</taxon>
        <taxon>Liliopsida</taxon>
        <taxon>Poales</taxon>
        <taxon>Poaceae</taxon>
        <taxon>BOP clade</taxon>
        <taxon>Oryzoideae</taxon>
        <taxon>Oryzeae</taxon>
        <taxon>Oryzinae</taxon>
        <taxon>Oryza</taxon>
        <taxon>Oryza sativa</taxon>
    </lineage>
</organism>
<feature type="chain" id="PRO_0000425298" description="Protein G1">
    <location>
        <begin position="1"/>
        <end position="276"/>
    </location>
</feature>
<feature type="domain" description="ALOG" evidence="2">
    <location>
        <begin position="24"/>
        <end position="183"/>
    </location>
</feature>
<feature type="region of interest" description="Disordered" evidence="3">
    <location>
        <begin position="1"/>
        <end position="30"/>
    </location>
</feature>
<feature type="region of interest" description="Disordered" evidence="3">
    <location>
        <begin position="178"/>
        <end position="213"/>
    </location>
</feature>
<feature type="short sequence motif" description="Nuclear localization signal" evidence="1">
    <location>
        <begin position="181"/>
        <end position="185"/>
    </location>
</feature>
<feature type="compositionally biased region" description="Basic and acidic residues" evidence="3">
    <location>
        <begin position="21"/>
        <end position="30"/>
    </location>
</feature>
<feature type="compositionally biased region" description="Basic residues" evidence="3">
    <location>
        <begin position="178"/>
        <end position="187"/>
    </location>
</feature>
<feature type="compositionally biased region" description="Gly residues" evidence="3">
    <location>
        <begin position="189"/>
        <end position="202"/>
    </location>
</feature>
<feature type="compositionally biased region" description="Low complexity" evidence="3">
    <location>
        <begin position="203"/>
        <end position="213"/>
    </location>
</feature>
<proteinExistence type="evidence at protein level"/>
<accession>Q8GVZ6</accession>
<accession>A0A0P0X2M8</accession>
<gene>
    <name type="primary">G1</name>
    <name type="synonym">ELE</name>
    <name type="ordered locus">Os07g0139300</name>
    <name type="ordered locus">LOC_Os07g04670</name>
    <name type="ORF">OJ1417_E01.118</name>
    <name type="ORF">P0495H05.58</name>
</gene>
<comment type="function">
    <text evidence="1 4 5">Probable transcription regulator that acts as a developmental regulator by promoting cell growth in response to light (By similarity). Transcription regulator that restrains empty glumes growth, lemmas of the sterile florets located at the lateral side of the rice spikelet, to maintain their small size, probably by repressing lemma identity via transcription regulation.</text>
</comment>
<comment type="subcellular location">
    <subcellularLocation>
        <location evidence="4 5">Nucleus</location>
    </subcellularLocation>
</comment>
<comment type="tissue specificity">
    <text evidence="4 5">Expressed at the empty glumes of immature spikelets, which are lemmas of the sterile florets located at the lateral side of the spikelet, throughout their development.</text>
</comment>
<comment type="disruption phenotype">
    <text evidence="4 5">Enlarged sterile lemma in florets of the spikelet, caused by homeotic transformation of the sterile lemma into a lemma. Elongated empty glumes, which mimic the lemmas and have the epidermal morphology of lemmas with four or five vascular bundles.</text>
</comment>
<comment type="similarity">
    <text evidence="6">Belongs to the plant homeotic and developmental regulators ALOG protein family.</text>
</comment>
<keyword id="KW-0217">Developmental protein</keyword>
<keyword id="KW-0238">DNA-binding</keyword>
<keyword id="KW-0539">Nucleus</keyword>
<keyword id="KW-1185">Reference proteome</keyword>
<keyword id="KW-0804">Transcription</keyword>
<keyword id="KW-0805">Transcription regulation</keyword>
<dbReference type="EMBL" id="AB512480">
    <property type="protein sequence ID" value="BAI52969.1"/>
    <property type="molecule type" value="mRNA"/>
</dbReference>
<dbReference type="EMBL" id="FJ502130">
    <property type="protein sequence ID" value="ACT67591.1"/>
    <property type="molecule type" value="Genomic_DNA"/>
</dbReference>
<dbReference type="EMBL" id="AP003829">
    <property type="protein sequence ID" value="BAC45053.1"/>
    <property type="molecule type" value="Genomic_DNA"/>
</dbReference>
<dbReference type="EMBL" id="AP004314">
    <property type="protein sequence ID" value="BAC83499.1"/>
    <property type="molecule type" value="Genomic_DNA"/>
</dbReference>
<dbReference type="EMBL" id="AP014963">
    <property type="protein sequence ID" value="BAS99995.1"/>
    <property type="molecule type" value="Genomic_DNA"/>
</dbReference>
<dbReference type="RefSeq" id="XP_015646356.1">
    <property type="nucleotide sequence ID" value="XM_015790870.1"/>
</dbReference>
<dbReference type="SMR" id="Q8GVZ6"/>
<dbReference type="STRING" id="39947.Q8GVZ6"/>
<dbReference type="PaxDb" id="39947-Q8GVZ6"/>
<dbReference type="EnsemblPlants" id="Os07t0139300-01">
    <property type="protein sequence ID" value="Os07t0139300-01"/>
    <property type="gene ID" value="Os07g0139300"/>
</dbReference>
<dbReference type="Gramene" id="Os07t0139300-01">
    <property type="protein sequence ID" value="Os07t0139300-01"/>
    <property type="gene ID" value="Os07g0139300"/>
</dbReference>
<dbReference type="eggNOG" id="ENOG502QT0B">
    <property type="taxonomic scope" value="Eukaryota"/>
</dbReference>
<dbReference type="HOGENOM" id="CLU_071168_0_0_1"/>
<dbReference type="InParanoid" id="Q8GVZ6"/>
<dbReference type="OMA" id="EPPCPSY"/>
<dbReference type="OrthoDB" id="688435at2759"/>
<dbReference type="Proteomes" id="UP000000763">
    <property type="component" value="Chromosome 7"/>
</dbReference>
<dbReference type="Proteomes" id="UP000059680">
    <property type="component" value="Chromosome 7"/>
</dbReference>
<dbReference type="GO" id="GO:0005634">
    <property type="term" value="C:nucleus"/>
    <property type="evidence" value="ECO:0000314"/>
    <property type="project" value="UniProtKB"/>
</dbReference>
<dbReference type="GO" id="GO:0003677">
    <property type="term" value="F:DNA binding"/>
    <property type="evidence" value="ECO:0007669"/>
    <property type="project" value="UniProtKB-KW"/>
</dbReference>
<dbReference type="GO" id="GO:0048449">
    <property type="term" value="P:floral organ formation"/>
    <property type="evidence" value="ECO:0000315"/>
    <property type="project" value="UniProtKB"/>
</dbReference>
<dbReference type="GO" id="GO:0009299">
    <property type="term" value="P:mRNA transcription"/>
    <property type="evidence" value="ECO:0000314"/>
    <property type="project" value="UniProtKB"/>
</dbReference>
<dbReference type="GO" id="GO:0090698">
    <property type="term" value="P:post-embryonic plant morphogenesis"/>
    <property type="evidence" value="ECO:0000315"/>
    <property type="project" value="UniProtKB"/>
</dbReference>
<dbReference type="GO" id="GO:0009909">
    <property type="term" value="P:regulation of flower development"/>
    <property type="evidence" value="ECO:0000315"/>
    <property type="project" value="UniProtKB"/>
</dbReference>
<dbReference type="GO" id="GO:0009416">
    <property type="term" value="P:response to light stimulus"/>
    <property type="evidence" value="ECO:0000318"/>
    <property type="project" value="GO_Central"/>
</dbReference>
<dbReference type="InterPro" id="IPR040222">
    <property type="entry name" value="ALOG"/>
</dbReference>
<dbReference type="InterPro" id="IPR006936">
    <property type="entry name" value="ALOG_dom"/>
</dbReference>
<dbReference type="PANTHER" id="PTHR31165:SF71">
    <property type="entry name" value="PROTEIN G1"/>
    <property type="match status" value="1"/>
</dbReference>
<dbReference type="PANTHER" id="PTHR31165">
    <property type="entry name" value="PROTEIN G1-LIKE2"/>
    <property type="match status" value="1"/>
</dbReference>
<dbReference type="Pfam" id="PF04852">
    <property type="entry name" value="ALOG_dom"/>
    <property type="match status" value="1"/>
</dbReference>
<dbReference type="PROSITE" id="PS51697">
    <property type="entry name" value="ALOG"/>
    <property type="match status" value="1"/>
</dbReference>
<reference key="1">
    <citation type="journal article" date="2009" name="Proc. Natl. Acad. Sci. U.S.A.">
        <title>The homeotic gene long sterile lemma (G1) specifies sterile lemma identity in the rice spikelet.</title>
        <authorList>
            <person name="Yoshida A."/>
            <person name="Suzaki Y."/>
            <person name="Tanaka W."/>
            <person name="Hirano H.-Y."/>
        </authorList>
    </citation>
    <scope>NUCLEOTIDE SEQUENCE [MRNA]</scope>
    <scope>FUNCTION</scope>
    <scope>DISRUPTION PHENOTYPE</scope>
    <scope>TISSUE SPECIFICITY</scope>
    <scope>SUBCELLULAR LOCATION</scope>
    <scope>GENE FAMILY</scope>
    <scope>NOMENCLATURE</scope>
    <source>
        <strain>cv. Nipponbare</strain>
    </source>
</reference>
<reference key="2">
    <citation type="journal article" date="2010" name="J. Genet. Genomics">
        <title>ELE restrains empty glumes from developing into lemmas.</title>
        <authorList>
            <person name="Hong L."/>
            <person name="Qian Q."/>
            <person name="Zhu K."/>
            <person name="Tang D."/>
            <person name="Huang Z."/>
            <person name="Gao L."/>
            <person name="Li M."/>
            <person name="Gu M."/>
            <person name="Cheng Z."/>
        </authorList>
    </citation>
    <scope>NUCLEOTIDE SEQUENCE [GENOMIC DNA]</scope>
    <scope>FUNCTION</scope>
    <scope>DISRUPTION PHENOTYPE</scope>
    <scope>TISSUE SPECIFICITY</scope>
    <scope>SUBCELLULAR LOCATION</scope>
    <source>
        <strain>cv. Nipponbare</strain>
    </source>
</reference>
<reference key="3">
    <citation type="journal article" date="2005" name="Nature">
        <title>The map-based sequence of the rice genome.</title>
        <authorList>
            <consortium name="International rice genome sequencing project (IRGSP)"/>
        </authorList>
    </citation>
    <scope>NUCLEOTIDE SEQUENCE [LARGE SCALE GENOMIC DNA]</scope>
    <source>
        <strain>cv. Nipponbare</strain>
    </source>
</reference>
<reference key="4">
    <citation type="journal article" date="2013" name="Rice">
        <title>Improvement of the Oryza sativa Nipponbare reference genome using next generation sequence and optical map data.</title>
        <authorList>
            <person name="Kawahara Y."/>
            <person name="de la Bastide M."/>
            <person name="Hamilton J.P."/>
            <person name="Kanamori H."/>
            <person name="McCombie W.R."/>
            <person name="Ouyang S."/>
            <person name="Schwartz D.C."/>
            <person name="Tanaka T."/>
            <person name="Wu J."/>
            <person name="Zhou S."/>
            <person name="Childs K.L."/>
            <person name="Davidson R.M."/>
            <person name="Lin H."/>
            <person name="Quesada-Ocampo L."/>
            <person name="Vaillancourt B."/>
            <person name="Sakai H."/>
            <person name="Lee S.S."/>
            <person name="Kim J."/>
            <person name="Numa H."/>
            <person name="Itoh T."/>
            <person name="Buell C.R."/>
            <person name="Matsumoto T."/>
        </authorList>
    </citation>
    <scope>GENOME REANNOTATION</scope>
    <source>
        <strain>cv. Nipponbare</strain>
    </source>
</reference>
<reference key="5">
    <citation type="journal article" date="2008" name="Nucleic Acids Res.">
        <title>The rice annotation project database (RAP-DB): 2008 update.</title>
        <authorList>
            <consortium name="The rice annotation project (RAP)"/>
        </authorList>
    </citation>
    <scope>GENOME REANNOTATION</scope>
    <source>
        <strain>cv. Nipponbare</strain>
    </source>
</reference>
<reference key="6">
    <citation type="journal article" date="2012" name="Biol. Direct">
        <title>ALOG domains: provenance of plant homeotic and developmental regulators from the DNA-binding domain of a novel class of DIRS1-type retroposons.</title>
        <authorList>
            <person name="Iyer L.M."/>
            <person name="Aravind L."/>
        </authorList>
    </citation>
    <scope>DNA-BINDING</scope>
    <scope>GENE FAMILY</scope>
</reference>
<protein>
    <recommendedName>
        <fullName>Protein G1</fullName>
    </recommendedName>
    <alternativeName>
        <fullName>Protein ELONGATED EMPTY GLUME</fullName>
    </alternativeName>
</protein>
<evidence type="ECO:0000250" key="1"/>
<evidence type="ECO:0000255" key="2">
    <source>
        <dbReference type="PROSITE-ProRule" id="PRU01033"/>
    </source>
</evidence>
<evidence type="ECO:0000256" key="3">
    <source>
        <dbReference type="SAM" id="MobiDB-lite"/>
    </source>
</evidence>
<evidence type="ECO:0000269" key="4">
    <source>
    </source>
</evidence>
<evidence type="ECO:0000269" key="5">
    <source>
    </source>
</evidence>
<evidence type="ECO:0000305" key="6"/>
<sequence>MSSSSAAALGSDDGCSPAELRPSRYESQKRRDWQTFTQYLAAHRPPLELRRCSGAHVLEFLRYLDRFGKTRVHEPPCPSYGGRSPSAAGPVAAAAAACQCPLRQAWGSLDALVGRLRAAYDERHGRAGEPDAVAGAGAVATDSTSSSSAAAANPFAARAVRLYLRDVRDAQAMARGISYHKKKKRRGGNMNGARGGGGGGARAGVNDGDATAPPVAVTPGLPLPPLPPCLNGVPFEYCDFGSVLGGAHGAHGGHGGGGGGFYGAGVYLPFLYNTFS</sequence>